<dbReference type="EMBL" id="AY615520">
    <property type="protein sequence ID" value="AAT99263.1"/>
    <property type="molecule type" value="mRNA"/>
</dbReference>
<dbReference type="EMBL" id="DS496120">
    <property type="protein sequence ID" value="EDP04848.1"/>
    <property type="molecule type" value="Genomic_DNA"/>
</dbReference>
<dbReference type="RefSeq" id="XP_001691740.1">
    <property type="nucleotide sequence ID" value="XM_001691688.1"/>
</dbReference>
<dbReference type="PDB" id="8BD7">
    <property type="method" value="EM"/>
    <property type="resolution" value="9.90 A"/>
    <property type="chains" value="S/V=1-1755"/>
</dbReference>
<dbReference type="PDB" id="8RUY">
    <property type="method" value="EM"/>
    <property type="resolution" value="15.40 A"/>
    <property type="chains" value="I/i=1-1755"/>
</dbReference>
<dbReference type="PDBsum" id="8BD7"/>
<dbReference type="PDBsum" id="8RUY"/>
<dbReference type="EMDB" id="EMD-15977"/>
<dbReference type="EMDB" id="EMD-19515"/>
<dbReference type="SMR" id="Q5DM57"/>
<dbReference type="PaxDb" id="3055-EDP04848"/>
<dbReference type="EnsemblPlants" id="PNW70057">
    <property type="protein sequence ID" value="PNW70057"/>
    <property type="gene ID" value="CHLRE_17g703900v5"/>
</dbReference>
<dbReference type="GeneID" id="5717250"/>
<dbReference type="Gramene" id="PNW70057">
    <property type="protein sequence ID" value="PNW70057"/>
    <property type="gene ID" value="CHLRE_17g703900v5"/>
</dbReference>
<dbReference type="KEGG" id="cre:CHLRE_17g703900v5"/>
<dbReference type="eggNOG" id="KOG3616">
    <property type="taxonomic scope" value="Eukaryota"/>
</dbReference>
<dbReference type="HOGENOM" id="CLU_002716_0_0_1"/>
<dbReference type="OMA" id="LKRTIWQ"/>
<dbReference type="OrthoDB" id="2186662at2759"/>
<dbReference type="GO" id="GO:0036064">
    <property type="term" value="C:ciliary basal body"/>
    <property type="evidence" value="ECO:0000314"/>
    <property type="project" value="MGI"/>
</dbReference>
<dbReference type="GO" id="GO:0005737">
    <property type="term" value="C:cytoplasm"/>
    <property type="evidence" value="ECO:0007669"/>
    <property type="project" value="UniProtKB-KW"/>
</dbReference>
<dbReference type="GO" id="GO:0030992">
    <property type="term" value="C:intraciliary transport particle B"/>
    <property type="evidence" value="ECO:0000314"/>
    <property type="project" value="BHF-UCL"/>
</dbReference>
<dbReference type="GO" id="GO:0031514">
    <property type="term" value="C:motile cilium"/>
    <property type="evidence" value="ECO:0000314"/>
    <property type="project" value="MGI"/>
</dbReference>
<dbReference type="FunFam" id="1.25.40.470:FF:000008">
    <property type="entry name" value="Intraflagellar transport protein 172 homolog"/>
    <property type="match status" value="1"/>
</dbReference>
<dbReference type="FunFam" id="1.25.40.470:FF:000012">
    <property type="entry name" value="intraflagellar transport protein 172 homolog"/>
    <property type="match status" value="1"/>
</dbReference>
<dbReference type="Gene3D" id="1.25.40.470">
    <property type="match status" value="3"/>
</dbReference>
<dbReference type="Gene3D" id="2.130.10.10">
    <property type="entry name" value="YVTN repeat-like/Quinoprotein amine dehydrogenase"/>
    <property type="match status" value="2"/>
</dbReference>
<dbReference type="InterPro" id="IPR011044">
    <property type="entry name" value="Quino_amine_DH_bsu"/>
</dbReference>
<dbReference type="InterPro" id="IPR056168">
    <property type="entry name" value="TPR_IF140/IFT172/WDR19"/>
</dbReference>
<dbReference type="InterPro" id="IPR056157">
    <property type="entry name" value="TPR_IFT80_172_dom"/>
</dbReference>
<dbReference type="InterPro" id="IPR015943">
    <property type="entry name" value="WD40/YVTN_repeat-like_dom_sf"/>
</dbReference>
<dbReference type="InterPro" id="IPR036322">
    <property type="entry name" value="WD40_repeat_dom_sf"/>
</dbReference>
<dbReference type="InterPro" id="IPR001680">
    <property type="entry name" value="WD40_rpt"/>
</dbReference>
<dbReference type="PANTHER" id="PTHR15722">
    <property type="entry name" value="IFT140/172-RELATED"/>
    <property type="match status" value="1"/>
</dbReference>
<dbReference type="PANTHER" id="PTHR15722:SF2">
    <property type="entry name" value="INTRAFLAGELLAR TRANSPORT PROTEIN 172 HOMOLOG"/>
    <property type="match status" value="1"/>
</dbReference>
<dbReference type="Pfam" id="PF24762">
    <property type="entry name" value="TPR_IF140-IFT172"/>
    <property type="match status" value="1"/>
</dbReference>
<dbReference type="Pfam" id="PF23387">
    <property type="entry name" value="TPR_IFT80_172"/>
    <property type="match status" value="1"/>
</dbReference>
<dbReference type="Pfam" id="PF00400">
    <property type="entry name" value="WD40"/>
    <property type="match status" value="1"/>
</dbReference>
<dbReference type="SMART" id="SM00320">
    <property type="entry name" value="WD40"/>
    <property type="match status" value="6"/>
</dbReference>
<dbReference type="SUPFAM" id="SSF50978">
    <property type="entry name" value="WD40 repeat-like"/>
    <property type="match status" value="1"/>
</dbReference>
<dbReference type="SUPFAM" id="SSF50969">
    <property type="entry name" value="YVTN repeat-like/Quinoprotein amine dehydrogenase"/>
    <property type="match status" value="1"/>
</dbReference>
<dbReference type="PROSITE" id="PS50294">
    <property type="entry name" value="WD_REPEATS_REGION"/>
    <property type="match status" value="1"/>
</dbReference>
<proteinExistence type="evidence at protein level"/>
<reference key="1">
    <citation type="journal article" date="2005" name="Curr. Biol.">
        <title>Chlamydomonas IFT172 is encoded by FLA11, interacts with CrEB1, and regulates IFT at the flagellar tip.</title>
        <authorList>
            <person name="Pedersen L.B."/>
            <person name="Miller M.S."/>
            <person name="Geimer S."/>
            <person name="Leitch J.M."/>
            <person name="Rosenbaum J.L."/>
            <person name="Cole D.G."/>
        </authorList>
    </citation>
    <scope>NUCLEOTIDE SEQUENCE [MRNA]</scope>
    <scope>INTERACTION WITH MAPRE1</scope>
    <scope>MUTAGENESIS OF LEU-1615</scope>
</reference>
<reference key="2">
    <citation type="journal article" date="2007" name="Science">
        <title>The Chlamydomonas genome reveals the evolution of key animal and plant functions.</title>
        <authorList>
            <person name="Merchant S.S."/>
            <person name="Prochnik S.E."/>
            <person name="Vallon O."/>
            <person name="Harris E.H."/>
            <person name="Karpowicz S.J."/>
            <person name="Witman G.B."/>
            <person name="Terry A."/>
            <person name="Salamov A."/>
            <person name="Fritz-Laylin L.K."/>
            <person name="Marechal-Drouard L."/>
            <person name="Marshall W.F."/>
            <person name="Qu L.H."/>
            <person name="Nelson D.R."/>
            <person name="Sanderfoot A.A."/>
            <person name="Spalding M.H."/>
            <person name="Kapitonov V.V."/>
            <person name="Ren Q."/>
            <person name="Ferris P."/>
            <person name="Lindquist E."/>
            <person name="Shapiro H."/>
            <person name="Lucas S.M."/>
            <person name="Grimwood J."/>
            <person name="Schmutz J."/>
            <person name="Cardol P."/>
            <person name="Cerutti H."/>
            <person name="Chanfreau G."/>
            <person name="Chen C.L."/>
            <person name="Cognat V."/>
            <person name="Croft M.T."/>
            <person name="Dent R."/>
            <person name="Dutcher S."/>
            <person name="Fernandez E."/>
            <person name="Fukuzawa H."/>
            <person name="Gonzalez-Ballester D."/>
            <person name="Gonzalez-Halphen D."/>
            <person name="Hallmann A."/>
            <person name="Hanikenne M."/>
            <person name="Hippler M."/>
            <person name="Inwood W."/>
            <person name="Jabbari K."/>
            <person name="Kalanon M."/>
            <person name="Kuras R."/>
            <person name="Lefebvre P.A."/>
            <person name="Lemaire S.D."/>
            <person name="Lobanov A.V."/>
            <person name="Lohr M."/>
            <person name="Manuell A."/>
            <person name="Meier I."/>
            <person name="Mets L."/>
            <person name="Mittag M."/>
            <person name="Mittelmeier T."/>
            <person name="Moroney J.V."/>
            <person name="Moseley J."/>
            <person name="Napoli C."/>
            <person name="Nedelcu A.M."/>
            <person name="Niyogi K."/>
            <person name="Novoselov S.V."/>
            <person name="Paulsen I.T."/>
            <person name="Pazour G.J."/>
            <person name="Purton S."/>
            <person name="Ral J.P."/>
            <person name="Riano-Pachon D.M."/>
            <person name="Riekhof W."/>
            <person name="Rymarquis L."/>
            <person name="Schroda M."/>
            <person name="Stern D."/>
            <person name="Umen J."/>
            <person name="Willows R."/>
            <person name="Wilson N."/>
            <person name="Zimmer S.L."/>
            <person name="Allmer J."/>
            <person name="Balk J."/>
            <person name="Bisova K."/>
            <person name="Chen C.J."/>
            <person name="Elias M."/>
            <person name="Gendler K."/>
            <person name="Hauser C."/>
            <person name="Lamb M.R."/>
            <person name="Ledford H."/>
            <person name="Long J.C."/>
            <person name="Minagawa J."/>
            <person name="Page M.D."/>
            <person name="Pan J."/>
            <person name="Pootakham W."/>
            <person name="Roje S."/>
            <person name="Rose A."/>
            <person name="Stahlberg E."/>
            <person name="Terauchi A.M."/>
            <person name="Yang P."/>
            <person name="Ball S."/>
            <person name="Bowler C."/>
            <person name="Dieckmann C.L."/>
            <person name="Gladyshev V.N."/>
            <person name="Green P."/>
            <person name="Jorgensen R."/>
            <person name="Mayfield S."/>
            <person name="Mueller-Roeber B."/>
            <person name="Rajamani S."/>
            <person name="Sayre R.T."/>
            <person name="Brokstein P."/>
            <person name="Dubchak I."/>
            <person name="Goodstein D."/>
            <person name="Hornick L."/>
            <person name="Huang Y.W."/>
            <person name="Jhaveri J."/>
            <person name="Luo Y."/>
            <person name="Martinez D."/>
            <person name="Ngau W.C."/>
            <person name="Otillar B."/>
            <person name="Poliakov A."/>
            <person name="Porter A."/>
            <person name="Szajkowski L."/>
            <person name="Werner G."/>
            <person name="Zhou K."/>
            <person name="Grigoriev I.V."/>
            <person name="Rokhsar D.S."/>
            <person name="Grossman A.R."/>
        </authorList>
    </citation>
    <scope>NUCLEOTIDE SEQUENCE [LARGE SCALE GENOMIC DNA]</scope>
    <source>
        <strain>CC-503</strain>
        <strain>cw92</strain>
    </source>
</reference>
<reference key="3">
    <citation type="journal article" date="1998" name="J. Cell Biol.">
        <title>Chlamydomonas kinesin-II-dependent intraflagellar transport (IFT): IFT particles contain proteins required for ciliary assembly in Caenorhabditis elegans sensory neurons.</title>
        <authorList>
            <person name="Cole D.G."/>
            <person name="Diener D.R."/>
            <person name="Himelblau A.L."/>
            <person name="Beech P.L."/>
            <person name="Fuster J.C."/>
            <person name="Rosenbaum J.L."/>
        </authorList>
    </citation>
    <scope>PROTEIN SEQUENCE OF 1243-1262</scope>
    <scope>SUBCELLULAR LOCATION</scope>
</reference>
<reference key="4">
    <citation type="journal article" date="2005" name="J. Biol. Chem.">
        <title>Characterization of the intraflagellar transport complex B core: direct interaction of the IFT81 and IFT74/72 subunits.</title>
        <authorList>
            <person name="Lucker B.F."/>
            <person name="Behal R.H."/>
            <person name="Qin H."/>
            <person name="Siron L.C."/>
            <person name="Taggart W.D."/>
            <person name="Rosenbaum J.L."/>
            <person name="Cole D.G."/>
        </authorList>
    </citation>
    <scope>INTERACTION WITH THE INTRAFLAGELLAR TRANSPORT CORE B COMPLEX</scope>
</reference>
<reference key="5">
    <citation type="journal article" date="2007" name="Cell Motil. Cytoskeleton">
        <title>Localization of EB1, IFT polypeptides, and kinesin-2 in Chlamydomonas flagellar axonemes via immunogold scanning electron microscopy.</title>
        <authorList>
            <person name="Sloboda R.D."/>
            <person name="Howard L."/>
        </authorList>
    </citation>
    <scope>SUBCELLULAR LOCATION</scope>
</reference>
<accession>Q5DM57</accession>
<organism>
    <name type="scientific">Chlamydomonas reinhardtii</name>
    <name type="common">Chlamydomonas smithii</name>
    <dbReference type="NCBI Taxonomy" id="3055"/>
    <lineage>
        <taxon>Eukaryota</taxon>
        <taxon>Viridiplantae</taxon>
        <taxon>Chlorophyta</taxon>
        <taxon>core chlorophytes</taxon>
        <taxon>Chlorophyceae</taxon>
        <taxon>CS clade</taxon>
        <taxon>Chlamydomonadales</taxon>
        <taxon>Chlamydomonadaceae</taxon>
        <taxon>Chlamydomonas</taxon>
    </lineage>
</organism>
<protein>
    <recommendedName>
        <fullName>Intraflagellar transport protein 172</fullName>
    </recommendedName>
</protein>
<evidence type="ECO:0000269" key="1">
    <source>
    </source>
</evidence>
<evidence type="ECO:0000269" key="2">
    <source>
    </source>
</evidence>
<evidence type="ECO:0000269" key="3">
    <source>
    </source>
</evidence>
<evidence type="ECO:0000269" key="4">
    <source>
    </source>
</evidence>
<evidence type="ECO:0000305" key="5"/>
<name>IF172_CHLRE</name>
<sequence>MQLRYFKSILPPADQYQKITSLTWAPNNSRLAAVSTDKVVYLFDENGEKRDKFKTKAAEANNPNTYIIRAMAFSPDSTKLAIAQSDNIVFIYRLVDPDTGAEKKSICNKFPQACAVTSLVWPKDRPNEVVFGLADGKVRLGMLKNNKSYTCYAHPENSYVVALASSLNGQNVISGHMDGAIWKFNFPAEEGGTPTSSQLVVHSCVPYSLGWGSCIAAAGNDNRVVFYDLNGREIRSFDYSNNDEVREFTTCAFNPSGDTVVFGTYNRFYMYTFNIQRNDWEEAGHKQIDNFYAVSAASWKPDGSKMTVGSMTGAVDMYDACVKRHMYKGKFEFTYVSKSAVIVKTLKTGMRIVLKSVYGYEIEKINIYHDRYLIARTTYTLLMGDLDTCKLSEIPWDSDGSEKFHFENERVCMVHYAGELHIVEYGRNDVLGTCRTEHMNPYLISAVVQEARGIASESKKLAYLIDLQTVRIQDLMAPVGSTLATVNHDTKVDWLELNQRGTHLLFRDKKRHLHLFSLSGQERTTLLNYCQYVQWVPGSDVIVAQSRNNLCVWYSVNKPDNVTMFPIKGEVVDIERHNHRTEVIVDEGINTVSYALDEALIYFGAALEDQDYERAVQTLEPLELTPETEAQWMQLAEQALATNQLVIAERCYAALGDIAKSRFLHKVVKKAQQAAKEFGGDGTDAWSVRAMMAQLNKQWPVSESLLLAQGKVDDAITLYQDNHRWEDAIRVADSTHHANAAALKQQYLTWLLETGQEEQAGAVKEREGDYLAAIGLYLKGGLPGRAAQVVMSVHNVNWDPALLDSILASLAKAGLYERAGELYEHMSRSSEAMQSYRRGHAYRKAIDLARREFPAEVIIIEEEWGDWLVTQKQMDAAINHFIESGATLKAIKAAIDCRQFAKAAGIIEVLDPREAMPYFRRIAQHYETTGALEEAERYYIRADMARDAVEMYSRAGKWEAAQRVARGYLTESEMRAFYRAKAAEFEAAHKLKEAEKAYLAAGGDDVDKAIAMYKRNKMYDQMIRLVTQYRKEKVPEAHTLIAQQLEVEGNLREAEKHFVEAKDWKSAVQMYRQVNQWEDALRVAKVYGGVNASKQVAYAWALTLGGDDGAQLLKKMGLLDHAIEYAVESGAFAQAFEMTRAGAKHKLPEVHLKYAMFLEDEGRFAEAEAEFISAGKPKEACDMYMHNQDWDAAMRIAERYDPTMVSEILVSQARVAVERKQWLPAEGLFIKAKRPEAALKMYRDARMWNDALRVAEQYLPTKVAEVQMELLSGQGAGGGSGGASADAVINKARGFERNNDYARAIETYLSLTAQDTSNQDQLEHCWGQAAQLAINYQRHRMKDVVNTVSERLQEIGRHQAAGELHESIDDAQGAIRAYCAGRLWDKARTLAGTNPTFSRYIEDQYNNYLLQNQQADELASRGGQHAQQAIEMYVARDEWAKVHELAAQQGPEVASNYALKHAERRFKQGDYAQAAQVFAQHGITAQPQYFELYKSIAQGVLHASQGDRNPVAEKSLRDMMYRLVNVLRSGGGAGKYKVDTDAFQNYYLAAHYLTCAAAAKEQGLKDIAAMNLTSVLRYVGPTIPADRAFYEAGLAWYEAGRKNMAFVMLNRFLDLSDAMDEPDSSAAVIENADFSDTDIPYDFTIPERAYCTESQREDVRNLVLEISMDRSSDQSLALKACEHCGKPTYEANLTCHFCKKKYDPCVVTGYPIQSYDRVVFKNNGPELNAIRDMWNKWVEAFGTDPVTGMQAAPMY</sequence>
<gene>
    <name type="primary">IFT172</name>
    <name type="synonym">FLA11</name>
    <name type="ORF">CHLREDRAFT_183240</name>
</gene>
<feature type="chain" id="PRO_0000328947" description="Intraflagellar transport protein 172">
    <location>
        <begin position="1"/>
        <end position="1755"/>
    </location>
</feature>
<feature type="repeat" description="WD 1">
    <location>
        <begin position="14"/>
        <end position="53"/>
    </location>
</feature>
<feature type="repeat" description="WD 2">
    <location>
        <begin position="63"/>
        <end position="102"/>
    </location>
</feature>
<feature type="repeat" description="WD 3">
    <location>
        <begin position="111"/>
        <end position="153"/>
    </location>
</feature>
<feature type="repeat" description="WD 4">
    <location>
        <begin position="155"/>
        <end position="194"/>
    </location>
</feature>
<feature type="repeat" description="WD 5">
    <location>
        <begin position="198"/>
        <end position="238"/>
    </location>
</feature>
<feature type="repeat" description="WD 6">
    <location>
        <begin position="289"/>
        <end position="328"/>
    </location>
</feature>
<feature type="repeat" description="WD 7">
    <location>
        <begin position="487"/>
        <end position="525"/>
    </location>
</feature>
<feature type="repeat" description="WD 8">
    <location>
        <begin position="526"/>
        <end position="563"/>
    </location>
</feature>
<feature type="repeat" description="TPR 1">
    <location>
        <begin position="597"/>
        <end position="628"/>
    </location>
</feature>
<feature type="repeat" description="TPR 2">
    <location>
        <begin position="696"/>
        <end position="729"/>
    </location>
</feature>
<feature type="repeat" description="TPR 3">
    <location>
        <begin position="754"/>
        <end position="788"/>
    </location>
</feature>
<feature type="repeat" description="TPR 4">
    <location>
        <begin position="813"/>
        <end position="846"/>
    </location>
</feature>
<feature type="repeat" description="TPR 5">
    <location>
        <begin position="858"/>
        <end position="892"/>
    </location>
</feature>
<feature type="repeat" description="TPR 6">
    <location>
        <begin position="916"/>
        <end position="949"/>
    </location>
</feature>
<feature type="repeat" description="TPR 7">
    <location>
        <begin position="988"/>
        <end position="1023"/>
    </location>
</feature>
<feature type="repeat" description="TPR 8">
    <location>
        <begin position="1048"/>
        <end position="1081"/>
    </location>
</feature>
<feature type="repeat" description="TPR 9">
    <location>
        <begin position="1219"/>
        <end position="1252"/>
    </location>
</feature>
<feature type="repeat" description="TPR 10">
    <location>
        <begin position="1285"/>
        <end position="1318"/>
    </location>
</feature>
<feature type="repeat" description="TPR 11">
    <location>
        <begin position="1355"/>
        <end position="1388"/>
    </location>
</feature>
<feature type="repeat" description="TPR 12">
    <location>
        <begin position="1455"/>
        <end position="1489"/>
    </location>
</feature>
<feature type="repeat" description="TPR 13">
    <location>
        <begin position="1586"/>
        <end position="1619"/>
    </location>
</feature>
<feature type="mutagenesis site" description="In fla11-ts; temperature-sensitive mutant that leads to defects in intraflagellar transport particle turnaround at the tip when transferred to nonpermissive temperature." evidence="1">
    <original>L</original>
    <variation>P</variation>
    <location>
        <position position="1615"/>
    </location>
</feature>
<keyword id="KW-0002">3D-structure</keyword>
<keyword id="KW-0966">Cell projection</keyword>
<keyword id="KW-0969">Cilium</keyword>
<keyword id="KW-0963">Cytoplasm</keyword>
<keyword id="KW-0206">Cytoskeleton</keyword>
<keyword id="KW-0217">Developmental protein</keyword>
<keyword id="KW-0903">Direct protein sequencing</keyword>
<keyword id="KW-0677">Repeat</keyword>
<keyword id="KW-0802">TPR repeat</keyword>
<keyword id="KW-0853">WD repeat</keyword>
<comment type="function">
    <text>Required for the maintenance and formation of cilia and participates in the control of flagellar assembly/disassembly at the tip. Involved in regulating the transition between anterograde and retrograde intraflagellar transport at the tip.</text>
</comment>
<comment type="subunit">
    <text evidence="1 2">Component of the IFT complex B, the core composed of IFT25, IFT27, IFT46, IFT52, IFT74, IFT81 and IFT88 as well as associated subunits IFT20, IFT57, IFT80 and IFT172. Interacts with microtubule end-binding protein 1 (MAPRE1/EB1).</text>
</comment>
<comment type="subcellular location">
    <subcellularLocation>
        <location evidence="3 4">Cytoplasm</location>
        <location evidence="3 4">Cytoskeleton</location>
        <location evidence="3 4">Cilium basal body</location>
    </subcellularLocation>
</comment>
<comment type="similarity">
    <text evidence="5">Belongs to the IFT172 family.</text>
</comment>